<keyword id="KW-0413">Isomerase</keyword>
<accession>B1YPI1</accession>
<name>RPIA_BURA4</name>
<sequence length="230" mass="23907">MTQDELKRLVGQAAADYVIQNVPEGAVIGVGTGSTANCFIDALAAVKSRYRGAVSSSVATTERLKSHGIKVFDLNEIESLQVYVDGADEIDASGAMIKGGGGALTREKIVASVADTFVCIADGSKRVPVLGAFPLPIEVVPMARTAIGRRVTALGGVPVLRVTQDGAPYITDNGNEIIDVKGLQIVDPRGFEAQINAWPGVVTVGLFAERGANLCLLGTPNGVETIVYPG</sequence>
<evidence type="ECO:0000255" key="1">
    <source>
        <dbReference type="HAMAP-Rule" id="MF_00170"/>
    </source>
</evidence>
<dbReference type="EC" id="5.3.1.6" evidence="1"/>
<dbReference type="EMBL" id="CP001025">
    <property type="protein sequence ID" value="ACB63958.1"/>
    <property type="molecule type" value="Genomic_DNA"/>
</dbReference>
<dbReference type="RefSeq" id="WP_012363785.1">
    <property type="nucleotide sequence ID" value="NC_010551.1"/>
</dbReference>
<dbReference type="SMR" id="B1YPI1"/>
<dbReference type="KEGG" id="bac:BamMC406_1471"/>
<dbReference type="HOGENOM" id="CLU_056590_1_1_4"/>
<dbReference type="OrthoDB" id="5870696at2"/>
<dbReference type="UniPathway" id="UPA00115">
    <property type="reaction ID" value="UER00412"/>
</dbReference>
<dbReference type="Proteomes" id="UP000001680">
    <property type="component" value="Chromosome 1"/>
</dbReference>
<dbReference type="GO" id="GO:0005829">
    <property type="term" value="C:cytosol"/>
    <property type="evidence" value="ECO:0007669"/>
    <property type="project" value="TreeGrafter"/>
</dbReference>
<dbReference type="GO" id="GO:0004751">
    <property type="term" value="F:ribose-5-phosphate isomerase activity"/>
    <property type="evidence" value="ECO:0007669"/>
    <property type="project" value="UniProtKB-UniRule"/>
</dbReference>
<dbReference type="GO" id="GO:0006014">
    <property type="term" value="P:D-ribose metabolic process"/>
    <property type="evidence" value="ECO:0007669"/>
    <property type="project" value="TreeGrafter"/>
</dbReference>
<dbReference type="GO" id="GO:0009052">
    <property type="term" value="P:pentose-phosphate shunt, non-oxidative branch"/>
    <property type="evidence" value="ECO:0007669"/>
    <property type="project" value="UniProtKB-UniRule"/>
</dbReference>
<dbReference type="CDD" id="cd01398">
    <property type="entry name" value="RPI_A"/>
    <property type="match status" value="1"/>
</dbReference>
<dbReference type="FunFam" id="3.40.50.1360:FF:000001">
    <property type="entry name" value="Ribose-5-phosphate isomerase A"/>
    <property type="match status" value="1"/>
</dbReference>
<dbReference type="Gene3D" id="3.30.70.260">
    <property type="match status" value="1"/>
</dbReference>
<dbReference type="Gene3D" id="3.40.50.1360">
    <property type="match status" value="1"/>
</dbReference>
<dbReference type="HAMAP" id="MF_00170">
    <property type="entry name" value="Rib_5P_isom_A"/>
    <property type="match status" value="1"/>
</dbReference>
<dbReference type="InterPro" id="IPR037171">
    <property type="entry name" value="NagB/RpiA_transferase-like"/>
</dbReference>
<dbReference type="InterPro" id="IPR020672">
    <property type="entry name" value="Ribose5P_isomerase_typA_subgr"/>
</dbReference>
<dbReference type="InterPro" id="IPR004788">
    <property type="entry name" value="Ribose5P_isomerase_type_A"/>
</dbReference>
<dbReference type="NCBIfam" id="NF001924">
    <property type="entry name" value="PRK00702.1"/>
    <property type="match status" value="1"/>
</dbReference>
<dbReference type="NCBIfam" id="TIGR00021">
    <property type="entry name" value="rpiA"/>
    <property type="match status" value="1"/>
</dbReference>
<dbReference type="PANTHER" id="PTHR11934">
    <property type="entry name" value="RIBOSE-5-PHOSPHATE ISOMERASE"/>
    <property type="match status" value="1"/>
</dbReference>
<dbReference type="PANTHER" id="PTHR11934:SF0">
    <property type="entry name" value="RIBOSE-5-PHOSPHATE ISOMERASE"/>
    <property type="match status" value="1"/>
</dbReference>
<dbReference type="Pfam" id="PF06026">
    <property type="entry name" value="Rib_5-P_isom_A"/>
    <property type="match status" value="1"/>
</dbReference>
<dbReference type="SUPFAM" id="SSF75445">
    <property type="entry name" value="D-ribose-5-phosphate isomerase (RpiA), lid domain"/>
    <property type="match status" value="1"/>
</dbReference>
<dbReference type="SUPFAM" id="SSF100950">
    <property type="entry name" value="NagB/RpiA/CoA transferase-like"/>
    <property type="match status" value="1"/>
</dbReference>
<feature type="chain" id="PRO_1000097650" description="Ribose-5-phosphate isomerase A">
    <location>
        <begin position="1"/>
        <end position="230"/>
    </location>
</feature>
<feature type="active site" description="Proton acceptor" evidence="1">
    <location>
        <position position="107"/>
    </location>
</feature>
<feature type="binding site" evidence="1">
    <location>
        <begin position="32"/>
        <end position="35"/>
    </location>
    <ligand>
        <name>substrate</name>
    </ligand>
</feature>
<feature type="binding site" evidence="1">
    <location>
        <begin position="85"/>
        <end position="88"/>
    </location>
    <ligand>
        <name>substrate</name>
    </ligand>
</feature>
<feature type="binding site" evidence="1">
    <location>
        <begin position="98"/>
        <end position="101"/>
    </location>
    <ligand>
        <name>substrate</name>
    </ligand>
</feature>
<feature type="binding site" evidence="1">
    <location>
        <position position="125"/>
    </location>
    <ligand>
        <name>substrate</name>
    </ligand>
</feature>
<proteinExistence type="inferred from homology"/>
<organism>
    <name type="scientific">Burkholderia ambifaria (strain MC40-6)</name>
    <dbReference type="NCBI Taxonomy" id="398577"/>
    <lineage>
        <taxon>Bacteria</taxon>
        <taxon>Pseudomonadati</taxon>
        <taxon>Pseudomonadota</taxon>
        <taxon>Betaproteobacteria</taxon>
        <taxon>Burkholderiales</taxon>
        <taxon>Burkholderiaceae</taxon>
        <taxon>Burkholderia</taxon>
        <taxon>Burkholderia cepacia complex</taxon>
    </lineage>
</organism>
<gene>
    <name evidence="1" type="primary">rpiA</name>
    <name type="ordered locus">BamMC406_1471</name>
</gene>
<protein>
    <recommendedName>
        <fullName evidence="1">Ribose-5-phosphate isomerase A</fullName>
        <ecNumber evidence="1">5.3.1.6</ecNumber>
    </recommendedName>
    <alternativeName>
        <fullName evidence="1">Phosphoriboisomerase A</fullName>
        <shortName evidence="1">PRI</shortName>
    </alternativeName>
</protein>
<comment type="function">
    <text evidence="1">Catalyzes the reversible conversion of ribose-5-phosphate to ribulose 5-phosphate.</text>
</comment>
<comment type="catalytic activity">
    <reaction evidence="1">
        <text>aldehydo-D-ribose 5-phosphate = D-ribulose 5-phosphate</text>
        <dbReference type="Rhea" id="RHEA:14657"/>
        <dbReference type="ChEBI" id="CHEBI:58121"/>
        <dbReference type="ChEBI" id="CHEBI:58273"/>
        <dbReference type="EC" id="5.3.1.6"/>
    </reaction>
</comment>
<comment type="pathway">
    <text evidence="1">Carbohydrate degradation; pentose phosphate pathway; D-ribose 5-phosphate from D-ribulose 5-phosphate (non-oxidative stage): step 1/1.</text>
</comment>
<comment type="subunit">
    <text evidence="1">Homodimer.</text>
</comment>
<comment type="similarity">
    <text evidence="1">Belongs to the ribose 5-phosphate isomerase family.</text>
</comment>
<reference key="1">
    <citation type="submission" date="2008-04" db="EMBL/GenBank/DDBJ databases">
        <title>Complete sequence of chromosome 1 of Burkholderia ambifaria MC40-6.</title>
        <authorList>
            <person name="Copeland A."/>
            <person name="Lucas S."/>
            <person name="Lapidus A."/>
            <person name="Glavina del Rio T."/>
            <person name="Dalin E."/>
            <person name="Tice H."/>
            <person name="Pitluck S."/>
            <person name="Chain P."/>
            <person name="Malfatti S."/>
            <person name="Shin M."/>
            <person name="Vergez L."/>
            <person name="Lang D."/>
            <person name="Schmutz J."/>
            <person name="Larimer F."/>
            <person name="Land M."/>
            <person name="Hauser L."/>
            <person name="Kyrpides N."/>
            <person name="Lykidis A."/>
            <person name="Ramette A."/>
            <person name="Konstantinidis K."/>
            <person name="Tiedje J."/>
            <person name="Richardson P."/>
        </authorList>
    </citation>
    <scope>NUCLEOTIDE SEQUENCE [LARGE SCALE GENOMIC DNA]</scope>
    <source>
        <strain>MC40-6</strain>
    </source>
</reference>